<evidence type="ECO:0000250" key="1"/>
<evidence type="ECO:0000255" key="2">
    <source>
        <dbReference type="PROSITE-ProRule" id="PRU00978"/>
    </source>
</evidence>
<evidence type="ECO:0000256" key="3">
    <source>
        <dbReference type="SAM" id="MobiDB-lite"/>
    </source>
</evidence>
<evidence type="ECO:0000305" key="4"/>
<feature type="chain" id="PRO_0000076445" description="Transcription factor JunD">
    <location>
        <begin position="1"/>
        <end position="323"/>
    </location>
</feature>
<feature type="domain" description="bZIP" evidence="2">
    <location>
        <begin position="242"/>
        <end position="305"/>
    </location>
</feature>
<feature type="region of interest" description="Disordered" evidence="3">
    <location>
        <begin position="138"/>
        <end position="173"/>
    </location>
</feature>
<feature type="region of interest" description="Disordered" evidence="3">
    <location>
        <begin position="197"/>
        <end position="221"/>
    </location>
</feature>
<feature type="region of interest" description="Basic motif" evidence="2">
    <location>
        <begin position="242"/>
        <end position="269"/>
    </location>
</feature>
<feature type="region of interest" description="Leucine-zipper" evidence="2">
    <location>
        <begin position="270"/>
        <end position="298"/>
    </location>
</feature>
<feature type="compositionally biased region" description="Gly residues" evidence="3">
    <location>
        <begin position="141"/>
        <end position="167"/>
    </location>
</feature>
<feature type="compositionally biased region" description="Pro residues" evidence="3">
    <location>
        <begin position="198"/>
        <end position="212"/>
    </location>
</feature>
<proteinExistence type="inferred from homology"/>
<accession>P27921</accession>
<protein>
    <recommendedName>
        <fullName evidence="4">Transcription factor JunD</fullName>
    </recommendedName>
    <alternativeName>
        <fullName evidence="4">Transcription factor AP-1 subunit JunD</fullName>
    </alternativeName>
</protein>
<keyword id="KW-0010">Activator</keyword>
<keyword id="KW-0238">DNA-binding</keyword>
<keyword id="KW-0539">Nucleus</keyword>
<keyword id="KW-1185">Reference proteome</keyword>
<keyword id="KW-0804">Transcription</keyword>
<keyword id="KW-0805">Transcription regulation</keyword>
<comment type="subunit">
    <text evidence="1">Binds DNA as a dimer.</text>
</comment>
<comment type="subcellular location">
    <subcellularLocation>
        <location>Nucleus</location>
    </subcellularLocation>
</comment>
<comment type="similarity">
    <text evidence="4">Belongs to the bZIP family. Jun subfamily.</text>
</comment>
<name>JUND_CHICK</name>
<sequence>METPFYHDDVLSGLGSGFAPTSGSSGLLLPFPGGSMMKKDALGLALPEQVAAALKAPGAAAAAAAAAGGEATAGLLGSPEMGMLKLSSPELERLIIQSNGLVTTTPTSGQFLYPKAAASEEQEFAEGFVKALEDLHKQNQLGGGGGPNGGAAAAGGGGGGGGGGGGELPAPGLAPEPPVYANLSTYPAVSYAAEPGPFAAPPPRLPPPPPPPLKDEPQIVPEVPSFGESPPLSPIDMDTQERIKAERKRLRNRIAASKCRKRKLERISRLEEKVKSLKSQNTELASTASLLREQVAQLKQKVLSHVNSGCQLLPQHQHQVPAY</sequence>
<organism>
    <name type="scientific">Gallus gallus</name>
    <name type="common">Chicken</name>
    <dbReference type="NCBI Taxonomy" id="9031"/>
    <lineage>
        <taxon>Eukaryota</taxon>
        <taxon>Metazoa</taxon>
        <taxon>Chordata</taxon>
        <taxon>Craniata</taxon>
        <taxon>Vertebrata</taxon>
        <taxon>Euteleostomi</taxon>
        <taxon>Archelosauria</taxon>
        <taxon>Archosauria</taxon>
        <taxon>Dinosauria</taxon>
        <taxon>Saurischia</taxon>
        <taxon>Theropoda</taxon>
        <taxon>Coelurosauria</taxon>
        <taxon>Aves</taxon>
        <taxon>Neognathae</taxon>
        <taxon>Galloanserae</taxon>
        <taxon>Galliformes</taxon>
        <taxon>Phasianidae</taxon>
        <taxon>Phasianinae</taxon>
        <taxon>Gallus</taxon>
    </lineage>
</organism>
<reference key="1">
    <citation type="journal article" date="1991" name="Oncogene">
        <title>The chicken junD gene and its product.</title>
        <authorList>
            <person name="Hartl M."/>
            <person name="Hutchins J.T."/>
            <person name="Vogt P.K."/>
        </authorList>
    </citation>
    <scope>NUCLEOTIDE SEQUENCE [GENOMIC DNA]</scope>
</reference>
<dbReference type="EMBL" id="X60063">
    <property type="protein sequence ID" value="CAA42665.1"/>
    <property type="molecule type" value="Genomic_DNA"/>
</dbReference>
<dbReference type="PIR" id="S20099">
    <property type="entry name" value="S20099"/>
</dbReference>
<dbReference type="RefSeq" id="NP_001383604.1">
    <property type="nucleotide sequence ID" value="NM_001396675.1"/>
</dbReference>
<dbReference type="SMR" id="P27921"/>
<dbReference type="FunCoup" id="P27921">
    <property type="interactions" value="852"/>
</dbReference>
<dbReference type="STRING" id="9031.ENSGALP00000058357"/>
<dbReference type="Ensembl" id="ENSGALT00010066205.1">
    <property type="protein sequence ID" value="ENSGALP00010040471.1"/>
    <property type="gene ID" value="ENSGALG00010027307.1"/>
</dbReference>
<dbReference type="GeneID" id="107055370"/>
<dbReference type="VEuPathDB" id="HostDB:geneid_107055370"/>
<dbReference type="GeneTree" id="ENSGT00940000162806"/>
<dbReference type="InParanoid" id="P27921"/>
<dbReference type="OMA" id="PFFDGTM"/>
<dbReference type="OrthoDB" id="2187714at2759"/>
<dbReference type="PhylomeDB" id="P27921"/>
<dbReference type="PRO" id="PR:P27921"/>
<dbReference type="Proteomes" id="UP000000539">
    <property type="component" value="Chromosome 28"/>
</dbReference>
<dbReference type="Bgee" id="ENSGALG00000043641">
    <property type="expression patterns" value="Expressed in granulocyte and 14 other cell types or tissues"/>
</dbReference>
<dbReference type="GO" id="GO:0005654">
    <property type="term" value="C:nucleoplasm"/>
    <property type="evidence" value="ECO:0007669"/>
    <property type="project" value="Ensembl"/>
</dbReference>
<dbReference type="GO" id="GO:0035976">
    <property type="term" value="C:transcription factor AP-1 complex"/>
    <property type="evidence" value="ECO:0007669"/>
    <property type="project" value="Ensembl"/>
</dbReference>
<dbReference type="GO" id="GO:0005667">
    <property type="term" value="C:transcription regulator complex"/>
    <property type="evidence" value="ECO:0000318"/>
    <property type="project" value="GO_Central"/>
</dbReference>
<dbReference type="GO" id="GO:0017053">
    <property type="term" value="C:transcription repressor complex"/>
    <property type="evidence" value="ECO:0007669"/>
    <property type="project" value="Ensembl"/>
</dbReference>
<dbReference type="GO" id="GO:0001228">
    <property type="term" value="F:DNA-binding transcription activator activity, RNA polymerase II-specific"/>
    <property type="evidence" value="ECO:0007669"/>
    <property type="project" value="Ensembl"/>
</dbReference>
<dbReference type="GO" id="GO:0000981">
    <property type="term" value="F:DNA-binding transcription factor activity, RNA polymerase II-specific"/>
    <property type="evidence" value="ECO:0000318"/>
    <property type="project" value="GO_Central"/>
</dbReference>
<dbReference type="GO" id="GO:0019899">
    <property type="term" value="F:enzyme binding"/>
    <property type="evidence" value="ECO:0007669"/>
    <property type="project" value="Ensembl"/>
</dbReference>
<dbReference type="GO" id="GO:0000978">
    <property type="term" value="F:RNA polymerase II cis-regulatory region sequence-specific DNA binding"/>
    <property type="evidence" value="ECO:0000318"/>
    <property type="project" value="GO_Central"/>
</dbReference>
<dbReference type="GO" id="GO:0001221">
    <property type="term" value="F:transcription coregulator binding"/>
    <property type="evidence" value="ECO:0007669"/>
    <property type="project" value="Ensembl"/>
</dbReference>
<dbReference type="GO" id="GO:0071277">
    <property type="term" value="P:cellular response to calcium ion"/>
    <property type="evidence" value="ECO:0007669"/>
    <property type="project" value="Ensembl"/>
</dbReference>
<dbReference type="GO" id="GO:0010467">
    <property type="term" value="P:gene expression"/>
    <property type="evidence" value="ECO:0007669"/>
    <property type="project" value="Ensembl"/>
</dbReference>
<dbReference type="GO" id="GO:0000122">
    <property type="term" value="P:negative regulation of transcription by RNA polymerase II"/>
    <property type="evidence" value="ECO:0007669"/>
    <property type="project" value="Ensembl"/>
</dbReference>
<dbReference type="GO" id="GO:0002076">
    <property type="term" value="P:osteoblast development"/>
    <property type="evidence" value="ECO:0007669"/>
    <property type="project" value="Ensembl"/>
</dbReference>
<dbReference type="GO" id="GO:0045669">
    <property type="term" value="P:positive regulation of osteoblast differentiation"/>
    <property type="evidence" value="ECO:0007669"/>
    <property type="project" value="Ensembl"/>
</dbReference>
<dbReference type="GO" id="GO:0045944">
    <property type="term" value="P:positive regulation of transcription by RNA polymerase II"/>
    <property type="evidence" value="ECO:0000318"/>
    <property type="project" value="GO_Central"/>
</dbReference>
<dbReference type="GO" id="GO:0051726">
    <property type="term" value="P:regulation of cell cycle"/>
    <property type="evidence" value="ECO:0000318"/>
    <property type="project" value="GO_Central"/>
</dbReference>
<dbReference type="GO" id="GO:0042127">
    <property type="term" value="P:regulation of cell population proliferation"/>
    <property type="evidence" value="ECO:0000318"/>
    <property type="project" value="GO_Central"/>
</dbReference>
<dbReference type="GO" id="GO:0048545">
    <property type="term" value="P:response to steroid hormone"/>
    <property type="evidence" value="ECO:0000318"/>
    <property type="project" value="GO_Central"/>
</dbReference>
<dbReference type="CDD" id="cd14696">
    <property type="entry name" value="bZIP_Jun"/>
    <property type="match status" value="1"/>
</dbReference>
<dbReference type="FunFam" id="1.20.5.170:FF:000012">
    <property type="entry name" value="Putative transcription factor AP-1"/>
    <property type="match status" value="1"/>
</dbReference>
<dbReference type="Gene3D" id="1.20.5.170">
    <property type="match status" value="1"/>
</dbReference>
<dbReference type="InterPro" id="IPR050946">
    <property type="entry name" value="AP-1_TF_bZIP"/>
</dbReference>
<dbReference type="InterPro" id="IPR004827">
    <property type="entry name" value="bZIP"/>
</dbReference>
<dbReference type="InterPro" id="IPR046347">
    <property type="entry name" value="bZIP_sf"/>
</dbReference>
<dbReference type="InterPro" id="IPR005643">
    <property type="entry name" value="JNK"/>
</dbReference>
<dbReference type="InterPro" id="IPR002112">
    <property type="entry name" value="Leuzip_Jun"/>
</dbReference>
<dbReference type="InterPro" id="IPR008917">
    <property type="entry name" value="TF_DNA-bd_sf"/>
</dbReference>
<dbReference type="PANTHER" id="PTHR11462">
    <property type="entry name" value="JUN TRANSCRIPTION FACTOR-RELATED"/>
    <property type="match status" value="1"/>
</dbReference>
<dbReference type="PANTHER" id="PTHR11462:SF7">
    <property type="entry name" value="TRANSCRIPTION FACTOR JUND"/>
    <property type="match status" value="1"/>
</dbReference>
<dbReference type="Pfam" id="PF00170">
    <property type="entry name" value="bZIP_1"/>
    <property type="match status" value="1"/>
</dbReference>
<dbReference type="Pfam" id="PF03957">
    <property type="entry name" value="Jun"/>
    <property type="match status" value="1"/>
</dbReference>
<dbReference type="PRINTS" id="PR00043">
    <property type="entry name" value="LEUZIPPRJUN"/>
</dbReference>
<dbReference type="SMART" id="SM00338">
    <property type="entry name" value="BRLZ"/>
    <property type="match status" value="1"/>
</dbReference>
<dbReference type="SUPFAM" id="SSF47454">
    <property type="entry name" value="A DNA-binding domain in eukaryotic transcription factors"/>
    <property type="match status" value="1"/>
</dbReference>
<dbReference type="SUPFAM" id="SSF57959">
    <property type="entry name" value="Leucine zipper domain"/>
    <property type="match status" value="1"/>
</dbReference>
<dbReference type="PROSITE" id="PS50217">
    <property type="entry name" value="BZIP"/>
    <property type="match status" value="1"/>
</dbReference>
<dbReference type="PROSITE" id="PS00036">
    <property type="entry name" value="BZIP_BASIC"/>
    <property type="match status" value="1"/>
</dbReference>
<gene>
    <name type="primary">JUND</name>
</gene>